<feature type="chain" id="PRO_1000090229" description="Cobyric acid synthase">
    <location>
        <begin position="1"/>
        <end position="489"/>
    </location>
</feature>
<feature type="domain" description="GATase cobBQ-type" evidence="1">
    <location>
        <begin position="252"/>
        <end position="441"/>
    </location>
</feature>
<feature type="active site" description="Nucleophile" evidence="1">
    <location>
        <position position="330"/>
    </location>
</feature>
<feature type="active site" evidence="1">
    <location>
        <position position="433"/>
    </location>
</feature>
<accession>A9AZZ2</accession>
<name>COBQ_HERA2</name>
<protein>
    <recommendedName>
        <fullName evidence="1">Cobyric acid synthase</fullName>
    </recommendedName>
</protein>
<dbReference type="EMBL" id="CP000875">
    <property type="protein sequence ID" value="ABX03699.1"/>
    <property type="molecule type" value="Genomic_DNA"/>
</dbReference>
<dbReference type="STRING" id="316274.Haur_1051"/>
<dbReference type="KEGG" id="hau:Haur_1051"/>
<dbReference type="eggNOG" id="COG1492">
    <property type="taxonomic scope" value="Bacteria"/>
</dbReference>
<dbReference type="HOGENOM" id="CLU_019250_2_2_0"/>
<dbReference type="InParanoid" id="A9AZZ2"/>
<dbReference type="UniPathway" id="UPA00148"/>
<dbReference type="Proteomes" id="UP000000787">
    <property type="component" value="Chromosome"/>
</dbReference>
<dbReference type="GO" id="GO:0015420">
    <property type="term" value="F:ABC-type vitamin B12 transporter activity"/>
    <property type="evidence" value="ECO:0007669"/>
    <property type="project" value="UniProtKB-UniRule"/>
</dbReference>
<dbReference type="GO" id="GO:0003824">
    <property type="term" value="F:catalytic activity"/>
    <property type="evidence" value="ECO:0007669"/>
    <property type="project" value="InterPro"/>
</dbReference>
<dbReference type="GO" id="GO:0009236">
    <property type="term" value="P:cobalamin biosynthetic process"/>
    <property type="evidence" value="ECO:0007669"/>
    <property type="project" value="UniProtKB-UniRule"/>
</dbReference>
<dbReference type="CDD" id="cd05389">
    <property type="entry name" value="CobQ_N"/>
    <property type="match status" value="1"/>
</dbReference>
<dbReference type="CDD" id="cd01750">
    <property type="entry name" value="GATase1_CobQ"/>
    <property type="match status" value="1"/>
</dbReference>
<dbReference type="Gene3D" id="3.40.50.880">
    <property type="match status" value="1"/>
</dbReference>
<dbReference type="Gene3D" id="3.40.50.300">
    <property type="entry name" value="P-loop containing nucleotide triphosphate hydrolases"/>
    <property type="match status" value="1"/>
</dbReference>
<dbReference type="HAMAP" id="MF_00028">
    <property type="entry name" value="CobQ"/>
    <property type="match status" value="1"/>
</dbReference>
<dbReference type="InterPro" id="IPR029062">
    <property type="entry name" value="Class_I_gatase-like"/>
</dbReference>
<dbReference type="InterPro" id="IPR002586">
    <property type="entry name" value="CobQ/CobB/MinD/ParA_Nub-bd_dom"/>
</dbReference>
<dbReference type="InterPro" id="IPR033949">
    <property type="entry name" value="CobQ_GATase1"/>
</dbReference>
<dbReference type="InterPro" id="IPR047045">
    <property type="entry name" value="CobQ_N"/>
</dbReference>
<dbReference type="InterPro" id="IPR004459">
    <property type="entry name" value="CobQ_synth"/>
</dbReference>
<dbReference type="InterPro" id="IPR011698">
    <property type="entry name" value="GATase_3"/>
</dbReference>
<dbReference type="InterPro" id="IPR027417">
    <property type="entry name" value="P-loop_NTPase"/>
</dbReference>
<dbReference type="NCBIfam" id="TIGR00313">
    <property type="entry name" value="cobQ"/>
    <property type="match status" value="1"/>
</dbReference>
<dbReference type="NCBIfam" id="NF001989">
    <property type="entry name" value="PRK00784.1"/>
    <property type="match status" value="1"/>
</dbReference>
<dbReference type="PANTHER" id="PTHR21343:SF1">
    <property type="entry name" value="COBYRIC ACID SYNTHASE"/>
    <property type="match status" value="1"/>
</dbReference>
<dbReference type="PANTHER" id="PTHR21343">
    <property type="entry name" value="DETHIOBIOTIN SYNTHETASE"/>
    <property type="match status" value="1"/>
</dbReference>
<dbReference type="Pfam" id="PF01656">
    <property type="entry name" value="CbiA"/>
    <property type="match status" value="1"/>
</dbReference>
<dbReference type="Pfam" id="PF07685">
    <property type="entry name" value="GATase_3"/>
    <property type="match status" value="1"/>
</dbReference>
<dbReference type="SUPFAM" id="SSF52317">
    <property type="entry name" value="Class I glutamine amidotransferase-like"/>
    <property type="match status" value="1"/>
</dbReference>
<dbReference type="SUPFAM" id="SSF52540">
    <property type="entry name" value="P-loop containing nucleoside triphosphate hydrolases"/>
    <property type="match status" value="1"/>
</dbReference>
<dbReference type="PROSITE" id="PS51274">
    <property type="entry name" value="GATASE_COBBQ"/>
    <property type="match status" value="1"/>
</dbReference>
<keyword id="KW-0169">Cobalamin biosynthesis</keyword>
<keyword id="KW-0315">Glutamine amidotransferase</keyword>
<sequence length="489" mass="53562">MLAPVLMVVGTASSVGKSTLVSALCRIAARRGIRVAPFKAQNMSNNAAVTANGEEIARSIAVQAAAAKLTPSVQMNPILIKPEGQRRSQIIVQGRPWQTLEAIDYWQRKQLLWEIVTNSLDQLRQAYDLVIAEGAGSPVELNLKAHDITNMRVATYAQAQTLLVGDIDVGGIFAAMLGTLMLLEPEERQLIAGLIVNRFRGDPDLFTDGIQILEQRSNKPVLGVVPWLPQLGLPEEDAVALERPDQTTNNAALTIGVIQLPAIANFDDFDPLAQEQGVAVRYINQPHELQHCQALILPGTKHTLAARQWLTEQGFDQAIQQFQGPIVGICGGYQLLGQQIDDPEAVEGIGGSMAGLGLLPITTIFQRHKQTRQVQALSNLPWAKAYPLAGYEIHMGRTELLADQPAFSIQQAESTHADGCMRANGKVWGCYIHGIFANTEFRQAWLSRLGWQVQSAIQPIDPFERLADHVEACLEPNLLTKLLGQEIRD</sequence>
<gene>
    <name evidence="1" type="primary">cobQ</name>
    <name type="ordered locus">Haur_1051</name>
</gene>
<comment type="function">
    <text evidence="1">Catalyzes amidations at positions B, D, E, and G on adenosylcobyrinic A,C-diamide. NH(2) groups are provided by glutamine, and one molecule of ATP is hydrogenolyzed for each amidation.</text>
</comment>
<comment type="pathway">
    <text evidence="1">Cofactor biosynthesis; adenosylcobalamin biosynthesis.</text>
</comment>
<comment type="similarity">
    <text evidence="1">Belongs to the CobB/CobQ family. CobQ subfamily.</text>
</comment>
<proteinExistence type="inferred from homology"/>
<evidence type="ECO:0000255" key="1">
    <source>
        <dbReference type="HAMAP-Rule" id="MF_00028"/>
    </source>
</evidence>
<organism>
    <name type="scientific">Herpetosiphon aurantiacus (strain ATCC 23779 / DSM 785 / 114-95)</name>
    <dbReference type="NCBI Taxonomy" id="316274"/>
    <lineage>
        <taxon>Bacteria</taxon>
        <taxon>Bacillati</taxon>
        <taxon>Chloroflexota</taxon>
        <taxon>Chloroflexia</taxon>
        <taxon>Herpetosiphonales</taxon>
        <taxon>Herpetosiphonaceae</taxon>
        <taxon>Herpetosiphon</taxon>
    </lineage>
</organism>
<reference key="1">
    <citation type="journal article" date="2011" name="Stand. Genomic Sci.">
        <title>Complete genome sequence of the filamentous gliding predatory bacterium Herpetosiphon aurantiacus type strain (114-95(T)).</title>
        <authorList>
            <person name="Kiss H."/>
            <person name="Nett M."/>
            <person name="Domin N."/>
            <person name="Martin K."/>
            <person name="Maresca J.A."/>
            <person name="Copeland A."/>
            <person name="Lapidus A."/>
            <person name="Lucas S."/>
            <person name="Berry K.W."/>
            <person name="Glavina Del Rio T."/>
            <person name="Dalin E."/>
            <person name="Tice H."/>
            <person name="Pitluck S."/>
            <person name="Richardson P."/>
            <person name="Bruce D."/>
            <person name="Goodwin L."/>
            <person name="Han C."/>
            <person name="Detter J.C."/>
            <person name="Schmutz J."/>
            <person name="Brettin T."/>
            <person name="Land M."/>
            <person name="Hauser L."/>
            <person name="Kyrpides N.C."/>
            <person name="Ivanova N."/>
            <person name="Goeker M."/>
            <person name="Woyke T."/>
            <person name="Klenk H.P."/>
            <person name="Bryant D.A."/>
        </authorList>
    </citation>
    <scope>NUCLEOTIDE SEQUENCE [LARGE SCALE GENOMIC DNA]</scope>
    <source>
        <strain>ATCC 23779 / DSM 785 / 114-95</strain>
    </source>
</reference>